<feature type="chain" id="PRO_0000367444" description="RNA polymerase sigma factor SigS">
    <location>
        <begin position="1"/>
        <end position="156"/>
    </location>
</feature>
<feature type="DNA-binding region" description="H-T-H motif" evidence="1">
    <location>
        <begin position="126"/>
        <end position="145"/>
    </location>
</feature>
<feature type="short sequence motif" description="Polymerase core binding">
    <location>
        <begin position="29"/>
        <end position="44"/>
    </location>
</feature>
<gene>
    <name type="primary">sigS</name>
    <name type="ordered locus">SAB1635</name>
</gene>
<sequence>MKFNDVYNKHHKIIHHLLKKYNISYNYDEYYQLLLIKMWQLSQIYKPSSKQSLSSFLFTRLNFYLIDLFRQQNQLKDVILCENNSPTLTEQPTYFNEHDLRLQDIFKFLNHRERLWLKLYLEGYKQFEIAEIMSLSLSTIKLIKTSVKRKCQHNFK</sequence>
<protein>
    <recommendedName>
        <fullName>RNA polymerase sigma factor SigS</fullName>
    </recommendedName>
</protein>
<evidence type="ECO:0000250" key="1"/>
<evidence type="ECO:0000305" key="2"/>
<comment type="function">
    <text evidence="1">Sigma factors are initiation factors that promote the attachment of RNA polymerase to specific initiation sites and are then released. Sigma-S contributes to the protection against external stress, thus playing a role in cellular fitness and survival (By similarity).</text>
</comment>
<comment type="similarity">
    <text evidence="2">Belongs to the sigma-70 factor family.</text>
</comment>
<comment type="sequence caution" evidence="2">
    <conflict type="erroneous initiation">
        <sequence resource="EMBL-CDS" id="CAI81324"/>
    </conflict>
</comment>
<keyword id="KW-0238">DNA-binding</keyword>
<keyword id="KW-0731">Sigma factor</keyword>
<keyword id="KW-0804">Transcription</keyword>
<keyword id="KW-0805">Transcription regulation</keyword>
<accession>Q2YTL0</accession>
<name>SIGS_STAAB</name>
<proteinExistence type="inferred from homology"/>
<organism>
    <name type="scientific">Staphylococcus aureus (strain bovine RF122 / ET3-1)</name>
    <dbReference type="NCBI Taxonomy" id="273036"/>
    <lineage>
        <taxon>Bacteria</taxon>
        <taxon>Bacillati</taxon>
        <taxon>Bacillota</taxon>
        <taxon>Bacilli</taxon>
        <taxon>Bacillales</taxon>
        <taxon>Staphylococcaceae</taxon>
        <taxon>Staphylococcus</taxon>
    </lineage>
</organism>
<dbReference type="EMBL" id="AJ938182">
    <property type="protein sequence ID" value="CAI81324.1"/>
    <property type="status" value="ALT_INIT"/>
    <property type="molecule type" value="Genomic_DNA"/>
</dbReference>
<dbReference type="RefSeq" id="WP_000671046.1">
    <property type="nucleotide sequence ID" value="NC_007622.1"/>
</dbReference>
<dbReference type="SMR" id="Q2YTL0"/>
<dbReference type="KEGG" id="sab:SAB1635"/>
<dbReference type="HOGENOM" id="CLU_047691_20_2_9"/>
<dbReference type="GO" id="GO:0003677">
    <property type="term" value="F:DNA binding"/>
    <property type="evidence" value="ECO:0007669"/>
    <property type="project" value="UniProtKB-KW"/>
</dbReference>
<dbReference type="GO" id="GO:0016987">
    <property type="term" value="F:sigma factor activity"/>
    <property type="evidence" value="ECO:0007669"/>
    <property type="project" value="UniProtKB-KW"/>
</dbReference>
<dbReference type="GO" id="GO:0006352">
    <property type="term" value="P:DNA-templated transcription initiation"/>
    <property type="evidence" value="ECO:0007669"/>
    <property type="project" value="InterPro"/>
</dbReference>
<dbReference type="Gene3D" id="1.10.10.10">
    <property type="entry name" value="Winged helix-like DNA-binding domain superfamily/Winged helix DNA-binding domain"/>
    <property type="match status" value="1"/>
</dbReference>
<dbReference type="InterPro" id="IPR014284">
    <property type="entry name" value="RNA_pol_sigma-70_dom"/>
</dbReference>
<dbReference type="InterPro" id="IPR007627">
    <property type="entry name" value="RNA_pol_sigma70_r2"/>
</dbReference>
<dbReference type="InterPro" id="IPR013325">
    <property type="entry name" value="RNA_pol_sigma_r2"/>
</dbReference>
<dbReference type="InterPro" id="IPR016032">
    <property type="entry name" value="Sig_transdc_resp-reg_C-effctor"/>
</dbReference>
<dbReference type="InterPro" id="IPR036388">
    <property type="entry name" value="WH-like_DNA-bd_sf"/>
</dbReference>
<dbReference type="NCBIfam" id="TIGR02937">
    <property type="entry name" value="sigma70-ECF"/>
    <property type="match status" value="1"/>
</dbReference>
<dbReference type="Pfam" id="PF04542">
    <property type="entry name" value="Sigma70_r2"/>
    <property type="match status" value="1"/>
</dbReference>
<dbReference type="SUPFAM" id="SSF46894">
    <property type="entry name" value="C-terminal effector domain of the bipartite response regulators"/>
    <property type="match status" value="1"/>
</dbReference>
<dbReference type="SUPFAM" id="SSF88946">
    <property type="entry name" value="Sigma2 domain of RNA polymerase sigma factors"/>
    <property type="match status" value="1"/>
</dbReference>
<reference key="1">
    <citation type="journal article" date="2007" name="PLoS ONE">
        <title>Molecular correlates of host specialization in Staphylococcus aureus.</title>
        <authorList>
            <person name="Herron-Olson L."/>
            <person name="Fitzgerald J.R."/>
            <person name="Musser J.M."/>
            <person name="Kapur V."/>
        </authorList>
    </citation>
    <scope>NUCLEOTIDE SEQUENCE [LARGE SCALE GENOMIC DNA]</scope>
    <source>
        <strain>bovine RF122 / ET3-1</strain>
    </source>
</reference>